<comment type="subcellular location">
    <subcellularLocation>
        <location evidence="2">Cell membrane</location>
        <topology evidence="2">Multi-pass membrane protein</topology>
    </subcellularLocation>
</comment>
<comment type="similarity">
    <text evidence="2">Belongs to the UPF0114 family.</text>
</comment>
<organism>
    <name type="scientific">Helicobacter pylori (strain ATCC 700392 / 26695)</name>
    <name type="common">Campylobacter pylori</name>
    <dbReference type="NCBI Taxonomy" id="85962"/>
    <lineage>
        <taxon>Bacteria</taxon>
        <taxon>Pseudomonadati</taxon>
        <taxon>Campylobacterota</taxon>
        <taxon>Epsilonproteobacteria</taxon>
        <taxon>Campylobacterales</taxon>
        <taxon>Helicobacteraceae</taxon>
        <taxon>Helicobacter</taxon>
    </lineage>
</organism>
<keyword id="KW-1003">Cell membrane</keyword>
<keyword id="KW-0472">Membrane</keyword>
<keyword id="KW-1185">Reference proteome</keyword>
<keyword id="KW-0812">Transmembrane</keyword>
<keyword id="KW-1133">Transmembrane helix</keyword>
<protein>
    <recommendedName>
        <fullName>UPF0114 protein HP_0189</fullName>
    </recommendedName>
</protein>
<evidence type="ECO:0000255" key="1"/>
<evidence type="ECO:0000305" key="2"/>
<gene>
    <name type="ordered locus">HP_0189</name>
</gene>
<name>Y189_HELPY</name>
<reference key="1">
    <citation type="journal article" date="1997" name="Nature">
        <title>The complete genome sequence of the gastric pathogen Helicobacter pylori.</title>
        <authorList>
            <person name="Tomb J.-F."/>
            <person name="White O."/>
            <person name="Kerlavage A.R."/>
            <person name="Clayton R.A."/>
            <person name="Sutton G.G."/>
            <person name="Fleischmann R.D."/>
            <person name="Ketchum K.A."/>
            <person name="Klenk H.-P."/>
            <person name="Gill S.R."/>
            <person name="Dougherty B.A."/>
            <person name="Nelson K.E."/>
            <person name="Quackenbush J."/>
            <person name="Zhou L."/>
            <person name="Kirkness E.F."/>
            <person name="Peterson S.N."/>
            <person name="Loftus B.J."/>
            <person name="Richardson D.L."/>
            <person name="Dodson R.J."/>
            <person name="Khalak H.G."/>
            <person name="Glodek A."/>
            <person name="McKenney K."/>
            <person name="FitzGerald L.M."/>
            <person name="Lee N."/>
            <person name="Adams M.D."/>
            <person name="Hickey E.K."/>
            <person name="Berg D.E."/>
            <person name="Gocayne J.D."/>
            <person name="Utterback T.R."/>
            <person name="Peterson J.D."/>
            <person name="Kelley J.M."/>
            <person name="Cotton M.D."/>
            <person name="Weidman J.F."/>
            <person name="Fujii C."/>
            <person name="Bowman C."/>
            <person name="Watthey L."/>
            <person name="Wallin E."/>
            <person name="Hayes W.S."/>
            <person name="Borodovsky M."/>
            <person name="Karp P.D."/>
            <person name="Smith H.O."/>
            <person name="Fraser C.M."/>
            <person name="Venter J.C."/>
        </authorList>
    </citation>
    <scope>NUCLEOTIDE SEQUENCE [LARGE SCALE GENOMIC DNA]</scope>
    <source>
        <strain>ATCC 700392 / 26695</strain>
    </source>
</reference>
<proteinExistence type="inferred from homology"/>
<dbReference type="EMBL" id="AE000511">
    <property type="protein sequence ID" value="AAD07256.1"/>
    <property type="molecule type" value="Genomic_DNA"/>
</dbReference>
<dbReference type="PIR" id="E64543">
    <property type="entry name" value="E64543"/>
</dbReference>
<dbReference type="RefSeq" id="NP_206988.1">
    <property type="nucleotide sequence ID" value="NC_000915.1"/>
</dbReference>
<dbReference type="RefSeq" id="WP_000890458.1">
    <property type="nucleotide sequence ID" value="NC_018939.1"/>
</dbReference>
<dbReference type="DIP" id="DIP-3137N"/>
<dbReference type="FunCoup" id="O24989">
    <property type="interactions" value="4"/>
</dbReference>
<dbReference type="IntAct" id="O24989">
    <property type="interactions" value="1"/>
</dbReference>
<dbReference type="MINT" id="O24989"/>
<dbReference type="STRING" id="85962.HP_0189"/>
<dbReference type="PaxDb" id="85962-C694_00940"/>
<dbReference type="EnsemblBacteria" id="AAD07256">
    <property type="protein sequence ID" value="AAD07256"/>
    <property type="gene ID" value="HP_0189"/>
</dbReference>
<dbReference type="KEGG" id="heo:C694_00940"/>
<dbReference type="KEGG" id="hpy:HP_0189"/>
<dbReference type="PATRIC" id="fig|85962.47.peg.204"/>
<dbReference type="eggNOG" id="COG2862">
    <property type="taxonomic scope" value="Bacteria"/>
</dbReference>
<dbReference type="InParanoid" id="O24989"/>
<dbReference type="OrthoDB" id="9783569at2"/>
<dbReference type="PhylomeDB" id="O24989"/>
<dbReference type="Proteomes" id="UP000000429">
    <property type="component" value="Chromosome"/>
</dbReference>
<dbReference type="GO" id="GO:0005886">
    <property type="term" value="C:plasma membrane"/>
    <property type="evidence" value="ECO:0000318"/>
    <property type="project" value="GO_Central"/>
</dbReference>
<dbReference type="HAMAP" id="MF_00143">
    <property type="entry name" value="UPF0114"/>
    <property type="match status" value="1"/>
</dbReference>
<dbReference type="InterPro" id="IPR005134">
    <property type="entry name" value="UPF0114"/>
</dbReference>
<dbReference type="InterPro" id="IPR020761">
    <property type="entry name" value="UPF0114_bac"/>
</dbReference>
<dbReference type="NCBIfam" id="TIGR00645">
    <property type="entry name" value="HI0507"/>
    <property type="match status" value="1"/>
</dbReference>
<dbReference type="PANTHER" id="PTHR38596">
    <property type="entry name" value="UPF0114 PROTEIN YQHA"/>
    <property type="match status" value="1"/>
</dbReference>
<dbReference type="PANTHER" id="PTHR38596:SF1">
    <property type="entry name" value="UPF0114 PROTEIN YQHA"/>
    <property type="match status" value="1"/>
</dbReference>
<dbReference type="Pfam" id="PF03350">
    <property type="entry name" value="UPF0114"/>
    <property type="match status" value="1"/>
</dbReference>
<feature type="chain" id="PRO_0000214371" description="UPF0114 protein HP_0189">
    <location>
        <begin position="1"/>
        <end position="177"/>
    </location>
</feature>
<feature type="transmembrane region" description="Helical" evidence="1">
    <location>
        <begin position="15"/>
        <end position="35"/>
    </location>
</feature>
<feature type="transmembrane region" description="Helical" evidence="1">
    <location>
        <begin position="54"/>
        <end position="74"/>
    </location>
</feature>
<feature type="transmembrane region" description="Helical" evidence="1">
    <location>
        <begin position="145"/>
        <end position="165"/>
    </location>
</feature>
<sequence>MLEKLIERVLFATRWLLAPLCIAMSLVLVVLGYVFMKELWHMLSHLNTISETDLVLSALGLVDLLFMAGLVLMVLLASYESFVSKLDKVDASEITWLKHTDFNALKLKVSLSIVAISAIFLLKRYMSLEDVLSSIPKDTPLSHNPIFWQVVIHLVFVCSALLAAVTNNIAFSQNKAH</sequence>
<accession>O24989</accession>